<dbReference type="EMBL" id="CH981533">
    <property type="protein sequence ID" value="EDK47395.1"/>
    <property type="molecule type" value="Genomic_DNA"/>
</dbReference>
<dbReference type="RefSeq" id="XP_001523350.1">
    <property type="nucleotide sequence ID" value="XM_001523300.1"/>
</dbReference>
<dbReference type="SMR" id="A5E7I7"/>
<dbReference type="FunCoup" id="A5E7I7">
    <property type="interactions" value="1033"/>
</dbReference>
<dbReference type="STRING" id="379508.A5E7I7"/>
<dbReference type="VEuPathDB" id="FungiDB:LELG_05576"/>
<dbReference type="eggNOG" id="KOG2021">
    <property type="taxonomic scope" value="Eukaryota"/>
</dbReference>
<dbReference type="HOGENOM" id="CLU_004414_0_1_1"/>
<dbReference type="InParanoid" id="A5E7I7"/>
<dbReference type="OMA" id="HEMFLFG"/>
<dbReference type="OrthoDB" id="26399at2759"/>
<dbReference type="Proteomes" id="UP000001996">
    <property type="component" value="Unassembled WGS sequence"/>
</dbReference>
<dbReference type="GO" id="GO:0005737">
    <property type="term" value="C:cytoplasm"/>
    <property type="evidence" value="ECO:0007669"/>
    <property type="project" value="UniProtKB-SubCell"/>
</dbReference>
<dbReference type="GO" id="GO:0016363">
    <property type="term" value="C:nuclear matrix"/>
    <property type="evidence" value="ECO:0007669"/>
    <property type="project" value="EnsemblFungi"/>
</dbReference>
<dbReference type="GO" id="GO:0005643">
    <property type="term" value="C:nuclear pore"/>
    <property type="evidence" value="ECO:0007669"/>
    <property type="project" value="TreeGrafter"/>
</dbReference>
<dbReference type="GO" id="GO:0031267">
    <property type="term" value="F:small GTPase binding"/>
    <property type="evidence" value="ECO:0007669"/>
    <property type="project" value="EnsemblFungi"/>
</dbReference>
<dbReference type="GO" id="GO:0000049">
    <property type="term" value="F:tRNA binding"/>
    <property type="evidence" value="ECO:0007669"/>
    <property type="project" value="UniProtKB-KW"/>
</dbReference>
<dbReference type="GO" id="GO:0008033">
    <property type="term" value="P:tRNA processing"/>
    <property type="evidence" value="ECO:0007669"/>
    <property type="project" value="UniProtKB-KW"/>
</dbReference>
<dbReference type="GO" id="GO:0071528">
    <property type="term" value="P:tRNA re-export from nucleus"/>
    <property type="evidence" value="ECO:0007669"/>
    <property type="project" value="EnsemblFungi"/>
</dbReference>
<dbReference type="Gene3D" id="1.25.10.10">
    <property type="entry name" value="Leucine-rich Repeat Variant"/>
    <property type="match status" value="1"/>
</dbReference>
<dbReference type="InterPro" id="IPR011989">
    <property type="entry name" value="ARM-like"/>
</dbReference>
<dbReference type="InterPro" id="IPR016024">
    <property type="entry name" value="ARM-type_fold"/>
</dbReference>
<dbReference type="InterPro" id="IPR013598">
    <property type="entry name" value="Exportin-1/Importin-b-like"/>
</dbReference>
<dbReference type="InterPro" id="IPR045546">
    <property type="entry name" value="Exportin-T_C"/>
</dbReference>
<dbReference type="InterPro" id="IPR040017">
    <property type="entry name" value="XPOT"/>
</dbReference>
<dbReference type="PANTHER" id="PTHR15952:SF11">
    <property type="entry name" value="EXPORTIN-T"/>
    <property type="match status" value="1"/>
</dbReference>
<dbReference type="PANTHER" id="PTHR15952">
    <property type="entry name" value="EXPORTIN-T/LOS1"/>
    <property type="match status" value="1"/>
</dbReference>
<dbReference type="Pfam" id="PF19282">
    <property type="entry name" value="Exportin-T"/>
    <property type="match status" value="1"/>
</dbReference>
<dbReference type="Pfam" id="PF08389">
    <property type="entry name" value="Xpo1"/>
    <property type="match status" value="1"/>
</dbReference>
<dbReference type="SUPFAM" id="SSF48371">
    <property type="entry name" value="ARM repeat"/>
    <property type="match status" value="1"/>
</dbReference>
<sequence>MESQILNAIEIALDGSADQKLQVQAYEFLNEVKGSKSGYDTALKLLSSSPSNTLISQLKFFLYQVLEENAENLDPEDCLQLCQTLFKMLSEFIVNDLKDEAFLRNKLAQVFAKVFTQVYISTVPDFLTNLLATTQTNSQLALDYYTRILMSIHMEIGDKYITRSPALSERNMTLKDAIRSRDMSALVTSWFNILENTNNLDEVLDNTLNIIAQYVDWMEIGLFVSPQSINTIIGYLSRENERNSTCETLIHILLKKMPAQNKLELVSLLNLTNVISSIDLSDDLEFVERIAKLANQIGEELLIVLGNQPSLLDQVNEQLLKLWPIVLTFLGHEYDDVSQSVFPFIQQFLGACKKHSQLYSVELLSTLLNKTISKMEYDEEDDDSDEETERQFAEFRARLKLFQDGIASLVPDLYIEAVPIIINQSLFEGDKPWNKLELGMFELSNFSESLKNNVINAPKAKISESKPYLMFQEFLVKLINSPFIIKVNHPLIQSSFFELVVKHYSFLNSHENRKELVFKIIEIFTSPLGLLNSNDKVRLRSWYLFFRFMKLTKPKMDNEALIEDIVLKMQPLLVIKAELPTRDEDDDVVENGNFNNQQYLFETMGLLISLIPNEYVSLKVKLVQAMFQPIFNDLEKCISIANKEPIIVLQAHHSLMALGTIVRGYDYETNLKFPPEVVEKVDNAAQVVLITLENFSKSESVRDASRFAFARFIPILNSTIISGHLTKLITIIWSAPNLKISEISDFLSFLGQIAHTYRTDENIYQLLNNFLSPLFKKVFEVLDLPVTEDESLRPDISRDKNFLKKAILNFINAIIINHLPSLLVTESNKNELATVVSKLFEYAYDISDTAVSKLAIVQLINLVNVFGQEGKISDEQDKYGQSLPPVEGIDNFLMEKVVNLSFELPFRKQEFVLGDAQYRLIAQDIALLLKTFQQKKGEQFVEYLSVYLTNMGLGQDMTNDFCSNLINLDLKDYKKYFVTFVSQMKGEK</sequence>
<gene>
    <name type="primary">LOS1</name>
    <name type="ORF">LELG_05576</name>
</gene>
<evidence type="ECO:0000250" key="1"/>
<evidence type="ECO:0000305" key="2"/>
<name>XPOT_LODEL</name>
<organism>
    <name type="scientific">Lodderomyces elongisporus (strain ATCC 11503 / CBS 2605 / JCM 1781 / NBRC 1676 / NRRL YB-4239)</name>
    <name type="common">Yeast</name>
    <name type="synonym">Saccharomyces elongisporus</name>
    <dbReference type="NCBI Taxonomy" id="379508"/>
    <lineage>
        <taxon>Eukaryota</taxon>
        <taxon>Fungi</taxon>
        <taxon>Dikarya</taxon>
        <taxon>Ascomycota</taxon>
        <taxon>Saccharomycotina</taxon>
        <taxon>Pichiomycetes</taxon>
        <taxon>Debaryomycetaceae</taxon>
        <taxon>Candida/Lodderomyces clade</taxon>
        <taxon>Lodderomyces</taxon>
    </lineage>
</organism>
<feature type="chain" id="PRO_0000343096" description="Exportin-T">
    <location>
        <begin position="1"/>
        <end position="988"/>
    </location>
</feature>
<keyword id="KW-0963">Cytoplasm</keyword>
<keyword id="KW-0539">Nucleus</keyword>
<keyword id="KW-1185">Reference proteome</keyword>
<keyword id="KW-0694">RNA-binding</keyword>
<keyword id="KW-0813">Transport</keyword>
<keyword id="KW-0819">tRNA processing</keyword>
<keyword id="KW-0820">tRNA-binding</keyword>
<protein>
    <recommendedName>
        <fullName>Exportin-T</fullName>
    </recommendedName>
    <alternativeName>
        <fullName>Exportin(tRNA)</fullName>
    </alternativeName>
    <alternativeName>
        <fullName>Karyopherin-beta</fullName>
    </alternativeName>
    <alternativeName>
        <fullName>tRNA exportin</fullName>
    </alternativeName>
</protein>
<proteinExistence type="inferred from homology"/>
<reference key="1">
    <citation type="journal article" date="2009" name="Nature">
        <title>Evolution of pathogenicity and sexual reproduction in eight Candida genomes.</title>
        <authorList>
            <person name="Butler G."/>
            <person name="Rasmussen M.D."/>
            <person name="Lin M.F."/>
            <person name="Santos M.A.S."/>
            <person name="Sakthikumar S."/>
            <person name="Munro C.A."/>
            <person name="Rheinbay E."/>
            <person name="Grabherr M."/>
            <person name="Forche A."/>
            <person name="Reedy J.L."/>
            <person name="Agrafioti I."/>
            <person name="Arnaud M.B."/>
            <person name="Bates S."/>
            <person name="Brown A.J.P."/>
            <person name="Brunke S."/>
            <person name="Costanzo M.C."/>
            <person name="Fitzpatrick D.A."/>
            <person name="de Groot P.W.J."/>
            <person name="Harris D."/>
            <person name="Hoyer L.L."/>
            <person name="Hube B."/>
            <person name="Klis F.M."/>
            <person name="Kodira C."/>
            <person name="Lennard N."/>
            <person name="Logue M.E."/>
            <person name="Martin R."/>
            <person name="Neiman A.M."/>
            <person name="Nikolaou E."/>
            <person name="Quail M.A."/>
            <person name="Quinn J."/>
            <person name="Santos M.C."/>
            <person name="Schmitzberger F.F."/>
            <person name="Sherlock G."/>
            <person name="Shah P."/>
            <person name="Silverstein K.A.T."/>
            <person name="Skrzypek M.S."/>
            <person name="Soll D."/>
            <person name="Staggs R."/>
            <person name="Stansfield I."/>
            <person name="Stumpf M.P.H."/>
            <person name="Sudbery P.E."/>
            <person name="Srikantha T."/>
            <person name="Zeng Q."/>
            <person name="Berman J."/>
            <person name="Berriman M."/>
            <person name="Heitman J."/>
            <person name="Gow N.A.R."/>
            <person name="Lorenz M.C."/>
            <person name="Birren B.W."/>
            <person name="Kellis M."/>
            <person name="Cuomo C.A."/>
        </authorList>
    </citation>
    <scope>NUCLEOTIDE SEQUENCE [LARGE SCALE GENOMIC DNA]</scope>
    <source>
        <strain>ATCC 11503 / BCRC 21390 / CBS 2605 / JCM 1781 / NBRC 1676 / NRRL YB-4239</strain>
    </source>
</reference>
<accession>A5E7I7</accession>
<comment type="function">
    <text evidence="1">tRNA nucleus export receptor which facilitates tRNA translocation across the nuclear pore complex. Involved in pre-tRNA splicing, probably by affecting the interaction of pre-tRNA with splicing endonuclease (By similarity).</text>
</comment>
<comment type="subcellular location">
    <subcellularLocation>
        <location evidence="1">Nucleus</location>
    </subcellularLocation>
    <subcellularLocation>
        <location evidence="1">Cytoplasm</location>
    </subcellularLocation>
    <text evidence="1">Shuttles between the nucleus and the cytoplasm.</text>
</comment>
<comment type="similarity">
    <text evidence="2">Belongs to the exportin family.</text>
</comment>